<organism>
    <name type="scientific">Halalkalibacterium halodurans (strain ATCC BAA-125 / DSM 18197 / FERM 7344 / JCM 9153 / C-125)</name>
    <name type="common">Bacillus halodurans</name>
    <dbReference type="NCBI Taxonomy" id="272558"/>
    <lineage>
        <taxon>Bacteria</taxon>
        <taxon>Bacillati</taxon>
        <taxon>Bacillota</taxon>
        <taxon>Bacilli</taxon>
        <taxon>Bacillales</taxon>
        <taxon>Bacillaceae</taxon>
        <taxon>Halalkalibacterium (ex Joshi et al. 2022)</taxon>
    </lineage>
</organism>
<proteinExistence type="inferred from homology"/>
<keyword id="KW-0456">Lyase</keyword>
<keyword id="KW-0501">Molybdenum cofactor biosynthesis</keyword>
<keyword id="KW-1185">Reference proteome</keyword>
<dbReference type="EC" id="4.6.1.17" evidence="1"/>
<dbReference type="EMBL" id="BA000004">
    <property type="protein sequence ID" value="BAB06742.1"/>
    <property type="molecule type" value="Genomic_DNA"/>
</dbReference>
<dbReference type="PIR" id="G84027">
    <property type="entry name" value="G84027"/>
</dbReference>
<dbReference type="RefSeq" id="WP_010899167.1">
    <property type="nucleotide sequence ID" value="NC_002570.2"/>
</dbReference>
<dbReference type="SMR" id="Q9K8I3"/>
<dbReference type="STRING" id="272558.gene:10728933"/>
<dbReference type="KEGG" id="bha:BH3023"/>
<dbReference type="eggNOG" id="COG0315">
    <property type="taxonomic scope" value="Bacteria"/>
</dbReference>
<dbReference type="HOGENOM" id="CLU_074693_1_1_9"/>
<dbReference type="OrthoDB" id="9794429at2"/>
<dbReference type="UniPathway" id="UPA00344"/>
<dbReference type="Proteomes" id="UP000001258">
    <property type="component" value="Chromosome"/>
</dbReference>
<dbReference type="GO" id="GO:0061799">
    <property type="term" value="F:cyclic pyranopterin monophosphate synthase activity"/>
    <property type="evidence" value="ECO:0007669"/>
    <property type="project" value="UniProtKB-UniRule"/>
</dbReference>
<dbReference type="GO" id="GO:0006777">
    <property type="term" value="P:Mo-molybdopterin cofactor biosynthetic process"/>
    <property type="evidence" value="ECO:0007669"/>
    <property type="project" value="UniProtKB-UniRule"/>
</dbReference>
<dbReference type="CDD" id="cd01420">
    <property type="entry name" value="MoaC_PE"/>
    <property type="match status" value="1"/>
</dbReference>
<dbReference type="Gene3D" id="3.30.70.640">
    <property type="entry name" value="Molybdopterin cofactor biosynthesis C (MoaC) domain"/>
    <property type="match status" value="1"/>
</dbReference>
<dbReference type="HAMAP" id="MF_01224_B">
    <property type="entry name" value="MoaC_B"/>
    <property type="match status" value="1"/>
</dbReference>
<dbReference type="InterPro" id="IPR023045">
    <property type="entry name" value="MoaC"/>
</dbReference>
<dbReference type="InterPro" id="IPR047594">
    <property type="entry name" value="MoaC_bact/euk"/>
</dbReference>
<dbReference type="InterPro" id="IPR036522">
    <property type="entry name" value="MoaC_sf"/>
</dbReference>
<dbReference type="InterPro" id="IPR050105">
    <property type="entry name" value="MoCo_biosynth_MoaA/MoaC"/>
</dbReference>
<dbReference type="InterPro" id="IPR002820">
    <property type="entry name" value="Mopterin_CF_biosynth-C_dom"/>
</dbReference>
<dbReference type="NCBIfam" id="TIGR00581">
    <property type="entry name" value="moaC"/>
    <property type="match status" value="1"/>
</dbReference>
<dbReference type="NCBIfam" id="NF006870">
    <property type="entry name" value="PRK09364.1"/>
    <property type="match status" value="1"/>
</dbReference>
<dbReference type="PANTHER" id="PTHR22960:SF29">
    <property type="entry name" value="CYCLIC PYRANOPTERIN MONOPHOSPHATE SYNTHASE"/>
    <property type="match status" value="1"/>
</dbReference>
<dbReference type="PANTHER" id="PTHR22960">
    <property type="entry name" value="MOLYBDOPTERIN COFACTOR SYNTHESIS PROTEIN A"/>
    <property type="match status" value="1"/>
</dbReference>
<dbReference type="Pfam" id="PF01967">
    <property type="entry name" value="MoaC"/>
    <property type="match status" value="1"/>
</dbReference>
<dbReference type="SUPFAM" id="SSF55040">
    <property type="entry name" value="Molybdenum cofactor biosynthesis protein C, MoaC"/>
    <property type="match status" value="1"/>
</dbReference>
<feature type="chain" id="PRO_0000097786" description="Cyclic pyranopterin monophosphate synthase">
    <location>
        <begin position="1"/>
        <end position="165"/>
    </location>
</feature>
<feature type="active site" evidence="1">
    <location>
        <position position="130"/>
    </location>
</feature>
<feature type="binding site" evidence="1">
    <location>
        <begin position="75"/>
        <end position="77"/>
    </location>
    <ligand>
        <name>substrate</name>
    </ligand>
</feature>
<feature type="binding site" evidence="1">
    <location>
        <begin position="115"/>
        <end position="116"/>
    </location>
    <ligand>
        <name>substrate</name>
    </ligand>
</feature>
<sequence>MRDFTHFNEQGRAKMVDISEKSITERTAVAKSSVEVNKEIYEKIIGGKIRKGDVLAVAQIAGVMAAKNTSQWIPMCHPLSLTGVDISFEWEETRNHYLLHIEASVKTTGRTGVEMEALTAASATALTVYDMCKAIDKGMVIGPTYLVKKTGGVHGDFERSSSQKS</sequence>
<protein>
    <recommendedName>
        <fullName evidence="1">Cyclic pyranopterin monophosphate synthase</fullName>
        <ecNumber evidence="1">4.6.1.17</ecNumber>
    </recommendedName>
    <alternativeName>
        <fullName evidence="1">Molybdenum cofactor biosynthesis protein C</fullName>
    </alternativeName>
</protein>
<gene>
    <name evidence="1" type="primary">moaC</name>
    <name type="ordered locus">BH3023</name>
</gene>
<accession>Q9K8I3</accession>
<evidence type="ECO:0000255" key="1">
    <source>
        <dbReference type="HAMAP-Rule" id="MF_01224"/>
    </source>
</evidence>
<name>MOAC_HALH5</name>
<comment type="function">
    <text evidence="1">Catalyzes the conversion of (8S)-3',8-cyclo-7,8-dihydroguanosine 5'-triphosphate to cyclic pyranopterin monophosphate (cPMP).</text>
</comment>
<comment type="catalytic activity">
    <reaction evidence="1">
        <text>(8S)-3',8-cyclo-7,8-dihydroguanosine 5'-triphosphate = cyclic pyranopterin phosphate + diphosphate</text>
        <dbReference type="Rhea" id="RHEA:49580"/>
        <dbReference type="ChEBI" id="CHEBI:33019"/>
        <dbReference type="ChEBI" id="CHEBI:59648"/>
        <dbReference type="ChEBI" id="CHEBI:131766"/>
        <dbReference type="EC" id="4.6.1.17"/>
    </reaction>
</comment>
<comment type="pathway">
    <text evidence="1">Cofactor biosynthesis; molybdopterin biosynthesis.</text>
</comment>
<comment type="subunit">
    <text evidence="1">Homohexamer; trimer of dimers.</text>
</comment>
<comment type="similarity">
    <text evidence="1">Belongs to the MoaC family.</text>
</comment>
<reference key="1">
    <citation type="journal article" date="2000" name="Nucleic Acids Res.">
        <title>Complete genome sequence of the alkaliphilic bacterium Bacillus halodurans and genomic sequence comparison with Bacillus subtilis.</title>
        <authorList>
            <person name="Takami H."/>
            <person name="Nakasone K."/>
            <person name="Takaki Y."/>
            <person name="Maeno G."/>
            <person name="Sasaki R."/>
            <person name="Masui N."/>
            <person name="Fuji F."/>
            <person name="Hirama C."/>
            <person name="Nakamura Y."/>
            <person name="Ogasawara N."/>
            <person name="Kuhara S."/>
            <person name="Horikoshi K."/>
        </authorList>
    </citation>
    <scope>NUCLEOTIDE SEQUENCE [LARGE SCALE GENOMIC DNA]</scope>
    <source>
        <strain>ATCC BAA-125 / DSM 18197 / FERM 7344 / JCM 9153 / C-125</strain>
    </source>
</reference>